<sequence length="565" mass="60824">MSDTARISGGSFTSPPGRDVELNSFKEASQTRLYPYSSRKEEEGREDEQQRPEREEDTGALTGYKLVLVTVGLCFCIFCTSLDNTIVATAVPRITQQFHSLDDVGWYASAYLLTTCAVTLPFGRLYTFFPIKWVYLSALFVFELGSFICGITPSSLGLILGRAVAGLGGGGLFSGSLLIITQCVPLRRRPAFSGFIMSIFAVASVIAPLMGGAFTDHISWRWCFYINLPFGLVSAVVIFFTFQTTKPVVQASLREKAAGLDPLGTATFLPAIVCLLLATQWGGAQYPWGDGRIIALFTLFGVLLACFVGLQLWARERATLPPRLLRGRNIWGSALYGFCLNGAMFTFVYYLPIWFQAVQGTSATESGIRNLPLVISNVIFAIISGVLVSATGYFGPFMLLSAAMASIAAGLLSMLHPSSGAGEWIGYQVLLGSSIGMGFQLPVFVVQTTLASTDIPTATALMTFIQLLGGAIFVSVAQNVFRNQLAADIRAALPMLDPKAVINAGPTSLRAMYSGETLTTLVAMYNDAVVHTFYLAIGLAAASFLAATVIQWRPSPKSISHPDSS</sequence>
<comment type="function">
    <text evidence="5">Efflux pump; part of the gene cluster that mediates the biosynthesis of aurasperone B, a dimeric gamma-naphthopyrone.</text>
</comment>
<comment type="subcellular location">
    <subcellularLocation>
        <location evidence="4">Cell membrane</location>
        <topology evidence="1">Multi-pass membrane protein</topology>
    </subcellularLocation>
</comment>
<comment type="similarity">
    <text evidence="4">Belongs to the major facilitator superfamily. TCR/Tet family.</text>
</comment>
<organism>
    <name type="scientific">Aspergillus niger (strain ATCC MYA-4892 / CBS 513.88 / FGSC A1513)</name>
    <dbReference type="NCBI Taxonomy" id="425011"/>
    <lineage>
        <taxon>Eukaryota</taxon>
        <taxon>Fungi</taxon>
        <taxon>Dikarya</taxon>
        <taxon>Ascomycota</taxon>
        <taxon>Pezizomycotina</taxon>
        <taxon>Eurotiomycetes</taxon>
        <taxon>Eurotiomycetidae</taxon>
        <taxon>Eurotiales</taxon>
        <taxon>Aspergillaceae</taxon>
        <taxon>Aspergillus</taxon>
        <taxon>Aspergillus subgen. Circumdati</taxon>
    </lineage>
</organism>
<name>AUNC_ASPNC</name>
<reference key="1">
    <citation type="journal article" date="2007" name="Nat. Biotechnol.">
        <title>Genome sequencing and analysis of the versatile cell factory Aspergillus niger CBS 513.88.</title>
        <authorList>
            <person name="Pel H.J."/>
            <person name="de Winde J.H."/>
            <person name="Archer D.B."/>
            <person name="Dyer P.S."/>
            <person name="Hofmann G."/>
            <person name="Schaap P.J."/>
            <person name="Turner G."/>
            <person name="de Vries R.P."/>
            <person name="Albang R."/>
            <person name="Albermann K."/>
            <person name="Andersen M.R."/>
            <person name="Bendtsen J.D."/>
            <person name="Benen J.A.E."/>
            <person name="van den Berg M."/>
            <person name="Breestraat S."/>
            <person name="Caddick M.X."/>
            <person name="Contreras R."/>
            <person name="Cornell M."/>
            <person name="Coutinho P.M."/>
            <person name="Danchin E.G.J."/>
            <person name="Debets A.J.M."/>
            <person name="Dekker P."/>
            <person name="van Dijck P.W.M."/>
            <person name="van Dijk A."/>
            <person name="Dijkhuizen L."/>
            <person name="Driessen A.J.M."/>
            <person name="d'Enfert C."/>
            <person name="Geysens S."/>
            <person name="Goosen C."/>
            <person name="Groot G.S.P."/>
            <person name="de Groot P.W.J."/>
            <person name="Guillemette T."/>
            <person name="Henrissat B."/>
            <person name="Herweijer M."/>
            <person name="van den Hombergh J.P.T.W."/>
            <person name="van den Hondel C.A.M.J.J."/>
            <person name="van der Heijden R.T.J.M."/>
            <person name="van der Kaaij R.M."/>
            <person name="Klis F.M."/>
            <person name="Kools H.J."/>
            <person name="Kubicek C.P."/>
            <person name="van Kuyk P.A."/>
            <person name="Lauber J."/>
            <person name="Lu X."/>
            <person name="van der Maarel M.J.E.C."/>
            <person name="Meulenberg R."/>
            <person name="Menke H."/>
            <person name="Mortimer M.A."/>
            <person name="Nielsen J."/>
            <person name="Oliver S.G."/>
            <person name="Olsthoorn M."/>
            <person name="Pal K."/>
            <person name="van Peij N.N.M.E."/>
            <person name="Ram A.F.J."/>
            <person name="Rinas U."/>
            <person name="Roubos J.A."/>
            <person name="Sagt C.M.J."/>
            <person name="Schmoll M."/>
            <person name="Sun J."/>
            <person name="Ussery D."/>
            <person name="Varga J."/>
            <person name="Vervecken W."/>
            <person name="van de Vondervoort P.J.J."/>
            <person name="Wedler H."/>
            <person name="Woesten H.A.B."/>
            <person name="Zeng A.-P."/>
            <person name="van Ooyen A.J.J."/>
            <person name="Visser J."/>
            <person name="Stam H."/>
        </authorList>
    </citation>
    <scope>NUCLEOTIDE SEQUENCE [LARGE SCALE GENOMIC DNA]</scope>
    <source>
        <strain>ATCC MYA-4892 / CBS 513.88 / FGSC A1513</strain>
    </source>
</reference>
<reference key="2">
    <citation type="journal article" date="2019" name="Biochemistry">
        <title>Biaryl-forming enzymes from Aspergilli exhibit substrate-dependent stereoselectivity.</title>
        <authorList>
            <person name="Obermaier S."/>
            <person name="Mueller M."/>
        </authorList>
    </citation>
    <scope>FUNCTION</scope>
</reference>
<dbReference type="EMBL" id="AM269994">
    <property type="protein sequence ID" value="CAK37454.1"/>
    <property type="molecule type" value="Genomic_DNA"/>
</dbReference>
<dbReference type="RefSeq" id="XP_001389888.1">
    <property type="nucleotide sequence ID" value="XM_001389851.2"/>
</dbReference>
<dbReference type="SMR" id="A2QBE9"/>
<dbReference type="EnsemblFungi" id="CAK37454">
    <property type="protein sequence ID" value="CAK37454"/>
    <property type="gene ID" value="An01g15000"/>
</dbReference>
<dbReference type="GeneID" id="4977901"/>
<dbReference type="KEGG" id="ang:An01g15000"/>
<dbReference type="VEuPathDB" id="FungiDB:An01g15000"/>
<dbReference type="HOGENOM" id="CLU_000960_22_1_1"/>
<dbReference type="Proteomes" id="UP000006706">
    <property type="component" value="Chromosome 2R"/>
</dbReference>
<dbReference type="GO" id="GO:0005886">
    <property type="term" value="C:plasma membrane"/>
    <property type="evidence" value="ECO:0007669"/>
    <property type="project" value="UniProtKB-SubCell"/>
</dbReference>
<dbReference type="GO" id="GO:0022857">
    <property type="term" value="F:transmembrane transporter activity"/>
    <property type="evidence" value="ECO:0007669"/>
    <property type="project" value="InterPro"/>
</dbReference>
<dbReference type="CDD" id="cd17502">
    <property type="entry name" value="MFS_Azr1_MDR_like"/>
    <property type="match status" value="1"/>
</dbReference>
<dbReference type="FunFam" id="1.20.1250.20:FF:000196">
    <property type="entry name" value="MFS toxin efflux pump (AflT)"/>
    <property type="match status" value="1"/>
</dbReference>
<dbReference type="FunFam" id="1.20.1720.10:FF:000012">
    <property type="entry name" value="MFS toxin efflux pump (AflT)"/>
    <property type="match status" value="1"/>
</dbReference>
<dbReference type="Gene3D" id="1.20.1250.20">
    <property type="entry name" value="MFS general substrate transporter like domains"/>
    <property type="match status" value="1"/>
</dbReference>
<dbReference type="Gene3D" id="1.20.1720.10">
    <property type="entry name" value="Multidrug resistance protein D"/>
    <property type="match status" value="1"/>
</dbReference>
<dbReference type="InterPro" id="IPR011701">
    <property type="entry name" value="MFS"/>
</dbReference>
<dbReference type="InterPro" id="IPR020846">
    <property type="entry name" value="MFS_dom"/>
</dbReference>
<dbReference type="InterPro" id="IPR036259">
    <property type="entry name" value="MFS_trans_sf"/>
</dbReference>
<dbReference type="InterPro" id="IPR005829">
    <property type="entry name" value="Sugar_transporter_CS"/>
</dbReference>
<dbReference type="PANTHER" id="PTHR23501">
    <property type="entry name" value="MAJOR FACILITATOR SUPERFAMILY"/>
    <property type="match status" value="1"/>
</dbReference>
<dbReference type="PANTHER" id="PTHR23501:SF199">
    <property type="entry name" value="MFS EFFLUX TRANSPORTER INPD-RELATED"/>
    <property type="match status" value="1"/>
</dbReference>
<dbReference type="Pfam" id="PF07690">
    <property type="entry name" value="MFS_1"/>
    <property type="match status" value="1"/>
</dbReference>
<dbReference type="SUPFAM" id="SSF103473">
    <property type="entry name" value="MFS general substrate transporter"/>
    <property type="match status" value="1"/>
</dbReference>
<dbReference type="PROSITE" id="PS50850">
    <property type="entry name" value="MFS"/>
    <property type="match status" value="1"/>
</dbReference>
<dbReference type="PROSITE" id="PS00217">
    <property type="entry name" value="SUGAR_TRANSPORT_2"/>
    <property type="match status" value="1"/>
</dbReference>
<keyword id="KW-1003">Cell membrane</keyword>
<keyword id="KW-0472">Membrane</keyword>
<keyword id="KW-1185">Reference proteome</keyword>
<keyword id="KW-0812">Transmembrane</keyword>
<keyword id="KW-1133">Transmembrane helix</keyword>
<keyword id="KW-0813">Transport</keyword>
<accession>A2QBE9</accession>
<proteinExistence type="inferred from homology"/>
<gene>
    <name evidence="3" type="primary">aunc</name>
    <name type="ORF">An01g15000</name>
</gene>
<feature type="chain" id="PRO_0000449888" description="Efflux pump aunC">
    <location>
        <begin position="1"/>
        <end position="565"/>
    </location>
</feature>
<feature type="transmembrane region" description="Helical" evidence="1">
    <location>
        <begin position="59"/>
        <end position="79"/>
    </location>
</feature>
<feature type="transmembrane region" description="Helical" evidence="1">
    <location>
        <begin position="103"/>
        <end position="123"/>
    </location>
</feature>
<feature type="transmembrane region" description="Helical" evidence="1">
    <location>
        <begin position="128"/>
        <end position="148"/>
    </location>
</feature>
<feature type="transmembrane region" description="Helical" evidence="1">
    <location>
        <begin position="164"/>
        <end position="184"/>
    </location>
</feature>
<feature type="transmembrane region" description="Helical" evidence="1">
    <location>
        <begin position="194"/>
        <end position="214"/>
    </location>
</feature>
<feature type="transmembrane region" description="Helical" evidence="1">
    <location>
        <begin position="222"/>
        <end position="242"/>
    </location>
</feature>
<feature type="transmembrane region" description="Helical" evidence="1">
    <location>
        <begin position="257"/>
        <end position="277"/>
    </location>
</feature>
<feature type="transmembrane region" description="Helical" evidence="1">
    <location>
        <begin position="293"/>
        <end position="313"/>
    </location>
</feature>
<feature type="transmembrane region" description="Helical" evidence="1">
    <location>
        <begin position="335"/>
        <end position="355"/>
    </location>
</feature>
<feature type="transmembrane region" description="Helical" evidence="1">
    <location>
        <begin position="378"/>
        <end position="398"/>
    </location>
</feature>
<feature type="transmembrane region" description="Helical" evidence="1">
    <location>
        <begin position="399"/>
        <end position="419"/>
    </location>
</feature>
<feature type="transmembrane region" description="Helical" evidence="1">
    <location>
        <begin position="425"/>
        <end position="445"/>
    </location>
</feature>
<feature type="transmembrane region" description="Helical" evidence="1">
    <location>
        <begin position="457"/>
        <end position="477"/>
    </location>
</feature>
<feature type="transmembrane region" description="Helical" evidence="1">
    <location>
        <begin position="530"/>
        <end position="550"/>
    </location>
</feature>
<feature type="region of interest" description="Disordered" evidence="2">
    <location>
        <begin position="1"/>
        <end position="57"/>
    </location>
</feature>
<feature type="compositionally biased region" description="Polar residues" evidence="2">
    <location>
        <begin position="1"/>
        <end position="14"/>
    </location>
</feature>
<feature type="compositionally biased region" description="Basic and acidic residues" evidence="2">
    <location>
        <begin position="38"/>
        <end position="54"/>
    </location>
</feature>
<evidence type="ECO:0000255" key="1"/>
<evidence type="ECO:0000256" key="2">
    <source>
        <dbReference type="SAM" id="MobiDB-lite"/>
    </source>
</evidence>
<evidence type="ECO:0000303" key="3">
    <source>
    </source>
</evidence>
<evidence type="ECO:0000305" key="4"/>
<evidence type="ECO:0000305" key="5">
    <source>
    </source>
</evidence>
<protein>
    <recommendedName>
        <fullName evidence="3">Efflux pump aunC</fullName>
    </recommendedName>
    <alternativeName>
        <fullName evidence="3">Aurasperone B biosynthesis cluster protein C</fullName>
    </alternativeName>
</protein>